<keyword id="KW-0284">Flavonoid biosynthesis</keyword>
<keyword id="KW-0325">Glycoprotein</keyword>
<keyword id="KW-0328">Glycosyltransferase</keyword>
<keyword id="KW-0732">Signal</keyword>
<keyword id="KW-0808">Transferase</keyword>
<evidence type="ECO:0000250" key="1">
    <source>
        <dbReference type="UniProtKB" id="A0A0A1HA03"/>
    </source>
</evidence>
<evidence type="ECO:0000250" key="2">
    <source>
        <dbReference type="UniProtKB" id="P51094"/>
    </source>
</evidence>
<evidence type="ECO:0000250" key="3">
    <source>
        <dbReference type="UniProtKB" id="Q9SBQ8"/>
    </source>
</evidence>
<evidence type="ECO:0000255" key="4"/>
<evidence type="ECO:0000255" key="5">
    <source>
        <dbReference type="PROSITE-ProRule" id="PRU00498"/>
    </source>
</evidence>
<evidence type="ECO:0000269" key="6">
    <source>
    </source>
</evidence>
<evidence type="ECO:0000303" key="7">
    <source>
    </source>
</evidence>
<evidence type="ECO:0000305" key="8"/>
<evidence type="ECO:0000305" key="9">
    <source>
    </source>
</evidence>
<accession>P0DO59</accession>
<comment type="function">
    <text evidence="6">Flavonoid 3-O-glycosyltransferase involved in the biosynthesis of anthocyanins conferring flower red/pink colors, mainly anthocyanidin 3-O-glycosides (PubMed:35651780). Catalyzes the addition of UDP-sugar to the 3-OH of anthocyanidin, with a preference for UDP-galactose (UDP-Gal) as sugar donor and cyanidin as substrate; able to use delphinidin, pelargonidin, peonidin and petunidin as substrates in the presence of UDP-Gal, but barely active on malvidin (PubMed:35651780). Can also use UDP-glucose (UDP-Glu) as sugar donor with cyanidin, delphinidin, pelargonidin, peonidin and petunidin as substrates, but not active on malvidin (PubMed:35651780).</text>
</comment>
<comment type="catalytic activity">
    <reaction evidence="6">
        <text>cyanidin + UDP-alpha-D-galactose = cyanidin 3-O-beta-D-galactoside + UDP + H(+)</text>
        <dbReference type="Rhea" id="RHEA:35631"/>
        <dbReference type="ChEBI" id="CHEBI:15378"/>
        <dbReference type="ChEBI" id="CHEBI:58223"/>
        <dbReference type="ChEBI" id="CHEBI:66914"/>
        <dbReference type="ChEBI" id="CHEBI:71682"/>
        <dbReference type="ChEBI" id="CHEBI:77935"/>
        <dbReference type="EC" id="2.4.1.294"/>
    </reaction>
    <physiologicalReaction direction="left-to-right" evidence="9">
        <dbReference type="Rhea" id="RHEA:35632"/>
    </physiologicalReaction>
</comment>
<comment type="catalytic activity">
    <reaction evidence="6">
        <text>cyanidin + UDP-alpha-D-glucose = cyanidin 3-O-beta-D-glucoside + UDP + H(+)</text>
        <dbReference type="Rhea" id="RHEA:60100"/>
        <dbReference type="ChEBI" id="CHEBI:15378"/>
        <dbReference type="ChEBI" id="CHEBI:58223"/>
        <dbReference type="ChEBI" id="CHEBI:58885"/>
        <dbReference type="ChEBI" id="CHEBI:71682"/>
        <dbReference type="ChEBI" id="CHEBI:77857"/>
        <dbReference type="EC" id="2.4.1.115"/>
    </reaction>
    <physiologicalReaction direction="left-to-right" evidence="9">
        <dbReference type="Rhea" id="RHEA:60101"/>
    </physiologicalReaction>
</comment>
<comment type="catalytic activity">
    <reaction evidence="6">
        <text>delphinidin + UDP-alpha-D-glucose = delphinidin 3-O-beta-D-glucoside + UDP</text>
        <dbReference type="Rhea" id="RHEA:61500"/>
        <dbReference type="ChEBI" id="CHEBI:58223"/>
        <dbReference type="ChEBI" id="CHEBI:58885"/>
        <dbReference type="ChEBI" id="CHEBI:144775"/>
        <dbReference type="ChEBI" id="CHEBI:144776"/>
        <dbReference type="EC" id="2.4.1.115"/>
    </reaction>
    <physiologicalReaction direction="left-to-right" evidence="9">
        <dbReference type="Rhea" id="RHEA:61501"/>
    </physiologicalReaction>
</comment>
<comment type="catalytic activity">
    <reaction evidence="6">
        <text>peonidin + UDP-alpha-D-glucose = peonidin 3-O-beta-D-glucoside + UDP</text>
        <dbReference type="Rhea" id="RHEA:61508"/>
        <dbReference type="ChEBI" id="CHEBI:58223"/>
        <dbReference type="ChEBI" id="CHEBI:58885"/>
        <dbReference type="ChEBI" id="CHEBI:144779"/>
        <dbReference type="ChEBI" id="CHEBI:144780"/>
        <dbReference type="EC" id="2.4.1.115"/>
    </reaction>
    <physiologicalReaction direction="left-to-right" evidence="9">
        <dbReference type="Rhea" id="RHEA:61509"/>
    </physiologicalReaction>
</comment>
<comment type="catalytic activity">
    <reaction evidence="6">
        <text>pelargonidin + UDP-alpha-D-glucose = pelargonidin 3-O-beta-D-glucoside + UDP</text>
        <dbReference type="Rhea" id="RHEA:61504"/>
        <dbReference type="ChEBI" id="CHEBI:58223"/>
        <dbReference type="ChEBI" id="CHEBI:58885"/>
        <dbReference type="ChEBI" id="CHEBI:144777"/>
        <dbReference type="ChEBI" id="CHEBI:144778"/>
        <dbReference type="EC" id="2.4.1.115"/>
    </reaction>
    <physiologicalReaction direction="left-to-right" evidence="9">
        <dbReference type="Rhea" id="RHEA:61505"/>
    </physiologicalReaction>
</comment>
<comment type="catalytic activity">
    <reaction evidence="6">
        <text>delphinidin + UDP-alpha-D-galactose = delphinidin 3-O-beta-D-galactoside + UDP + H(+)</text>
        <dbReference type="Rhea" id="RHEA:74119"/>
        <dbReference type="ChEBI" id="CHEBI:15378"/>
        <dbReference type="ChEBI" id="CHEBI:58223"/>
        <dbReference type="ChEBI" id="CHEBI:66914"/>
        <dbReference type="ChEBI" id="CHEBI:144775"/>
        <dbReference type="ChEBI" id="CHEBI:193097"/>
    </reaction>
    <physiologicalReaction direction="left-to-right" evidence="9">
        <dbReference type="Rhea" id="RHEA:74120"/>
    </physiologicalReaction>
</comment>
<comment type="catalytic activity">
    <reaction evidence="6">
        <text>pelargonidin + UDP-alpha-D-galactose = pelargonidin 3-O-beta-D-galactoside betaine + UDP</text>
        <dbReference type="Rhea" id="RHEA:74123"/>
        <dbReference type="ChEBI" id="CHEBI:58223"/>
        <dbReference type="ChEBI" id="CHEBI:66914"/>
        <dbReference type="ChEBI" id="CHEBI:144777"/>
        <dbReference type="ChEBI" id="CHEBI:193099"/>
    </reaction>
    <physiologicalReaction direction="left-to-right" evidence="9">
        <dbReference type="Rhea" id="RHEA:74124"/>
    </physiologicalReaction>
</comment>
<comment type="catalytic activity">
    <reaction evidence="6">
        <text>peonidin + UDP-alpha-D-galactose = peonidin 3-O-beta-D-galactoside + UDP</text>
        <dbReference type="Rhea" id="RHEA:74127"/>
        <dbReference type="ChEBI" id="CHEBI:58223"/>
        <dbReference type="ChEBI" id="CHEBI:66914"/>
        <dbReference type="ChEBI" id="CHEBI:144779"/>
        <dbReference type="ChEBI" id="CHEBI:193098"/>
    </reaction>
    <physiologicalReaction direction="left-to-right" evidence="9">
        <dbReference type="Rhea" id="RHEA:74128"/>
    </physiologicalReaction>
</comment>
<comment type="catalytic activity">
    <reaction evidence="6">
        <text>petunidin + UDP-alpha-D-galactose = petunidin 3-O-beta-D-galactoside + UDP</text>
        <dbReference type="Rhea" id="RHEA:74135"/>
        <dbReference type="ChEBI" id="CHEBI:58223"/>
        <dbReference type="ChEBI" id="CHEBI:66914"/>
        <dbReference type="ChEBI" id="CHEBI:193101"/>
        <dbReference type="ChEBI" id="CHEBI:193102"/>
    </reaction>
    <physiologicalReaction direction="left-to-right" evidence="9">
        <dbReference type="Rhea" id="RHEA:74136"/>
    </physiologicalReaction>
</comment>
<comment type="catalytic activity">
    <reaction evidence="6">
        <text>petunidin + UDP-alpha-D-glucose = petunidin 3-O-beta-D-glucoside + UDP</text>
        <dbReference type="Rhea" id="RHEA:74139"/>
        <dbReference type="ChEBI" id="CHEBI:58223"/>
        <dbReference type="ChEBI" id="CHEBI:58885"/>
        <dbReference type="ChEBI" id="CHEBI:193101"/>
        <dbReference type="ChEBI" id="CHEBI:193103"/>
    </reaction>
    <physiologicalReaction direction="left-to-right" evidence="9">
        <dbReference type="Rhea" id="RHEA:74140"/>
    </physiologicalReaction>
</comment>
<comment type="catalytic activity">
    <reaction evidence="6">
        <text>an anthocyanidin + UDP-alpha-D-glucose + H(+) = an anthocyanidin 3-O-beta-D-glucoside + UDP</text>
        <dbReference type="Rhea" id="RHEA:20093"/>
        <dbReference type="ChEBI" id="CHEBI:15378"/>
        <dbReference type="ChEBI" id="CHEBI:16307"/>
        <dbReference type="ChEBI" id="CHEBI:58223"/>
        <dbReference type="ChEBI" id="CHEBI:58885"/>
        <dbReference type="ChEBI" id="CHEBI:143576"/>
        <dbReference type="EC" id="2.4.1.115"/>
    </reaction>
    <physiologicalReaction direction="left-to-right" evidence="9">
        <dbReference type="Rhea" id="RHEA:20094"/>
    </physiologicalReaction>
</comment>
<comment type="catalytic activity">
    <reaction evidence="6">
        <text>an anthocyanidin + UDP-alpha-D-galactose = an anthocyanidin 3-O-beta-D-galactoside + UDP</text>
        <dbReference type="Rhea" id="RHEA:74115"/>
        <dbReference type="ChEBI" id="CHEBI:58223"/>
        <dbReference type="ChEBI" id="CHEBI:66914"/>
        <dbReference type="ChEBI" id="CHEBI:143576"/>
        <dbReference type="ChEBI" id="CHEBI:193104"/>
    </reaction>
    <physiologicalReaction direction="left-to-right" evidence="9">
        <dbReference type="Rhea" id="RHEA:74116"/>
    </physiologicalReaction>
</comment>
<comment type="biophysicochemical properties">
    <phDependence>
        <text evidence="6">Optimum pH is 8.</text>
    </phDependence>
    <temperatureDependence>
        <text evidence="6">Optimum temperature is 30 degrees Celsius.</text>
    </temperatureDependence>
</comment>
<comment type="pathway">
    <text evidence="6">Pigment biosynthesis; anthocyanin biosynthesis.</text>
</comment>
<comment type="subunit">
    <text evidence="3">Monomer.</text>
</comment>
<comment type="tissue specificity">
    <text evidence="6">Mostly expressed in leaves and flowers and, to a lower extent, in roots (PubMed:35651780). In flowers, mainly observed in petals, stamens and scapes, and at lower levels in pistils and toruses (PubMed:35651780).</text>
</comment>
<comment type="developmental stage">
    <text evidence="6">In flowers, levels decrease from stage 1 to stage 3 but increase transiently at stage 4 and fade out at stage 5.</text>
</comment>
<comment type="similarity">
    <text evidence="8">Belongs to the UDP-glycosyltransferase family.</text>
</comment>
<dbReference type="EC" id="2.4.1.115" evidence="6"/>
<dbReference type="EC" id="2.4.1.294" evidence="6"/>
<dbReference type="SMR" id="P0DO59"/>
<dbReference type="UniPathway" id="UPA00009"/>
<dbReference type="GO" id="GO:0047213">
    <property type="term" value="F:anthocyanidin 3-O-glucosyltransferase activity"/>
    <property type="evidence" value="ECO:0000314"/>
    <property type="project" value="UniProtKB"/>
</dbReference>
<dbReference type="GO" id="GO:0080043">
    <property type="term" value="F:quercetin 3-O-glucosyltransferase activity"/>
    <property type="evidence" value="ECO:0007669"/>
    <property type="project" value="TreeGrafter"/>
</dbReference>
<dbReference type="GO" id="GO:0080044">
    <property type="term" value="F:quercetin 7-O-glucosyltransferase activity"/>
    <property type="evidence" value="ECO:0007669"/>
    <property type="project" value="TreeGrafter"/>
</dbReference>
<dbReference type="GO" id="GO:0009718">
    <property type="term" value="P:anthocyanin-containing compound biosynthetic process"/>
    <property type="evidence" value="ECO:0007669"/>
    <property type="project" value="UniProtKB-UniPathway"/>
</dbReference>
<dbReference type="GO" id="GO:0033485">
    <property type="term" value="P:cyanidin 3-O-glucoside biosynthetic process"/>
    <property type="evidence" value="ECO:0000314"/>
    <property type="project" value="UniProtKB"/>
</dbReference>
<dbReference type="GO" id="GO:0031542">
    <property type="term" value="P:positive regulation of anthocyanin biosynthetic process"/>
    <property type="evidence" value="ECO:0000314"/>
    <property type="project" value="UniProtKB"/>
</dbReference>
<dbReference type="CDD" id="cd03784">
    <property type="entry name" value="GT1_Gtf-like"/>
    <property type="match status" value="1"/>
</dbReference>
<dbReference type="FunFam" id="3.40.50.2000:FF:000060">
    <property type="entry name" value="Glycosyltransferase"/>
    <property type="match status" value="1"/>
</dbReference>
<dbReference type="FunFam" id="3.40.50.2000:FF:000129">
    <property type="entry name" value="Glycosyltransferase"/>
    <property type="match status" value="1"/>
</dbReference>
<dbReference type="Gene3D" id="3.40.50.2000">
    <property type="entry name" value="Glycogen Phosphorylase B"/>
    <property type="match status" value="2"/>
</dbReference>
<dbReference type="InterPro" id="IPR002213">
    <property type="entry name" value="UDP_glucos_trans"/>
</dbReference>
<dbReference type="PANTHER" id="PTHR11926:SF1494">
    <property type="entry name" value="FLAVONOL 3-O-GLUCOSYLTRANSFERASE UGT76E12-RELATED"/>
    <property type="match status" value="1"/>
</dbReference>
<dbReference type="PANTHER" id="PTHR11926">
    <property type="entry name" value="GLUCOSYL/GLUCURONOSYL TRANSFERASES"/>
    <property type="match status" value="1"/>
</dbReference>
<dbReference type="Pfam" id="PF00201">
    <property type="entry name" value="UDPGT"/>
    <property type="match status" value="1"/>
</dbReference>
<dbReference type="SUPFAM" id="SSF53756">
    <property type="entry name" value="UDP-Glycosyltransferase/glycogen phosphorylase"/>
    <property type="match status" value="1"/>
</dbReference>
<protein>
    <recommendedName>
        <fullName evidence="8">Anthocyanidin 3-O-galactosyltransferase 3GT6</fullName>
        <ecNumber evidence="6">2.4.1.115</ecNumber>
        <ecNumber evidence="6">2.4.1.294</ecNumber>
    </recommendedName>
    <alternativeName>
        <fullName evidence="7">Flavonoid 3-O-glycosyltransferase 6</fullName>
        <shortName evidence="7">Rd3GT6</shortName>
    </alternativeName>
</protein>
<reference key="1">
    <citation type="journal article" date="2022" name="Front. Plant Sci.">
        <title>Characterization of two key flavonoid 3-O-glycosyltransferases involved in the formation of flower color in Rhododendron delavayi.</title>
        <authorList>
            <person name="Sun W."/>
            <person name="Sun S."/>
            <person name="Xu H."/>
            <person name="Wang Y."/>
            <person name="Chen Y."/>
            <person name="Xu X."/>
            <person name="Yi Y."/>
            <person name="Ju Z."/>
        </authorList>
    </citation>
    <scope>NUCLEOTIDE SEQUENCE [MRNA]</scope>
    <scope>FUNCTION</scope>
    <scope>CATALYTIC ACTIVITY</scope>
    <scope>PATHWAY</scope>
    <scope>TISSUE SPECIFICITY</scope>
    <scope>BIOPHYSICOCHEMICAL PROPERTIES</scope>
</reference>
<proteinExistence type="evidence at protein level"/>
<sequence>MTNSSKGRHVAVLPFPFSTHAAPILSIIRRLASAAPDVTFSFFSTPQSIQTLFPSENPENNIRPHAISDGVPEGFVFSGKHHEDINLFLAAGKESFEAGMKAAEAETGRRIDCVVSDAFMWFSCELAEEMGVPWVTLWVSGACSLAAHCYTDLIRETVGMHDTAGREDEIVKFVPGFSEVRLGDLPSGVVYGNLESPFSMMLYKMGQVLHKAAAVAINSFDELEPEPVKVLASKLKLLTCGPFNPISPPPSSNLDEYGCIPWLDRRKAASVAYIGFGTVATPPPVELAALAEALEASSTPFLWSLRDNPKQHLPEGFLKRTSELQKIVPWAPQAQVLAHRSVGVFINHCGWNSVVESVEAGVPIIGRPFFGDHQVDAWMVENVWKIGVRVEGAVFTKGITMSALELVLSHDQKQKELREQVGKYKEFALKAFGPKQRSTCNLSTLLEIVAGYNL</sequence>
<organism>
    <name type="scientific">Rhododendron delavayi</name>
    <name type="common">Rhododendron</name>
    <name type="synonym">Rhododendron arboreum subsp. delavayi</name>
    <dbReference type="NCBI Taxonomy" id="321363"/>
    <lineage>
        <taxon>Eukaryota</taxon>
        <taxon>Viridiplantae</taxon>
        <taxon>Streptophyta</taxon>
        <taxon>Embryophyta</taxon>
        <taxon>Tracheophyta</taxon>
        <taxon>Spermatophyta</taxon>
        <taxon>Magnoliopsida</taxon>
        <taxon>eudicotyledons</taxon>
        <taxon>Gunneridae</taxon>
        <taxon>Pentapetalae</taxon>
        <taxon>asterids</taxon>
        <taxon>Ericales</taxon>
        <taxon>Ericaceae</taxon>
        <taxon>Ericoideae</taxon>
        <taxon>Rhodoreae</taxon>
        <taxon>Rhododendron</taxon>
    </lineage>
</organism>
<feature type="signal peptide" evidence="4">
    <location>
        <begin position="1"/>
        <end position="21"/>
    </location>
</feature>
<feature type="chain" id="PRO_0000457210" description="Anthocyanidin 3-O-galactosyltransferase 3GT6" evidence="4">
    <location>
        <begin position="22"/>
        <end position="454"/>
    </location>
</feature>
<feature type="active site" description="Proton acceptor" evidence="1">
    <location>
        <position position="20"/>
    </location>
</feature>
<feature type="active site" description="Charge relay" evidence="1">
    <location>
        <position position="117"/>
    </location>
</feature>
<feature type="binding site" evidence="2">
    <location>
        <position position="18"/>
    </location>
    <ligand>
        <name>an anthocyanidin</name>
        <dbReference type="ChEBI" id="CHEBI:143576"/>
    </ligand>
</feature>
<feature type="binding site" evidence="2">
    <location>
        <position position="20"/>
    </location>
    <ligand>
        <name>an anthocyanidin</name>
        <dbReference type="ChEBI" id="CHEBI:143576"/>
    </ligand>
</feature>
<feature type="binding site" evidence="2">
    <location>
        <position position="148"/>
    </location>
    <ligand>
        <name>an anthocyanidin</name>
        <dbReference type="ChEBI" id="CHEBI:143576"/>
    </ligand>
</feature>
<feature type="binding site" evidence="1">
    <location>
        <position position="331"/>
    </location>
    <ligand>
        <name>UDP-alpha-D-glucose</name>
        <dbReference type="ChEBI" id="CHEBI:58885"/>
    </ligand>
</feature>
<feature type="binding site" evidence="1">
    <location>
        <position position="333"/>
    </location>
    <ligand>
        <name>UDP-alpha-D-glucose</name>
        <dbReference type="ChEBI" id="CHEBI:58885"/>
    </ligand>
</feature>
<feature type="binding site" evidence="1">
    <location>
        <position position="348"/>
    </location>
    <ligand>
        <name>UDP-alpha-D-glucose</name>
        <dbReference type="ChEBI" id="CHEBI:58885"/>
    </ligand>
</feature>
<feature type="binding site" evidence="1">
    <location>
        <position position="351"/>
    </location>
    <ligand>
        <name>UDP-alpha-D-glucose</name>
        <dbReference type="ChEBI" id="CHEBI:58885"/>
    </ligand>
</feature>
<feature type="binding site" evidence="1">
    <location>
        <position position="352"/>
    </location>
    <ligand>
        <name>UDP-alpha-D-glucose</name>
        <dbReference type="ChEBI" id="CHEBI:58885"/>
    </ligand>
</feature>
<feature type="binding site" evidence="1">
    <location>
        <position position="353"/>
    </location>
    <ligand>
        <name>UDP-alpha-D-glucose</name>
        <dbReference type="ChEBI" id="CHEBI:58885"/>
    </ligand>
</feature>
<feature type="binding site" evidence="1">
    <location>
        <position position="356"/>
    </location>
    <ligand>
        <name>UDP-alpha-D-glucose</name>
        <dbReference type="ChEBI" id="CHEBI:58885"/>
    </ligand>
</feature>
<feature type="binding site" evidence="2">
    <location>
        <position position="371"/>
    </location>
    <ligand>
        <name>an anthocyanidin</name>
        <dbReference type="ChEBI" id="CHEBI:143576"/>
    </ligand>
</feature>
<feature type="binding site" evidence="1">
    <location>
        <position position="372"/>
    </location>
    <ligand>
        <name>UDP-alpha-D-glucose</name>
        <dbReference type="ChEBI" id="CHEBI:58885"/>
    </ligand>
</feature>
<feature type="glycosylation site" description="N-linked (GlcNAc...) asparagine" evidence="5">
    <location>
        <position position="441"/>
    </location>
</feature>
<name>F3GT6_RHODL</name>
<gene>
    <name evidence="7" type="primary">3GT6</name>
</gene>